<proteinExistence type="evidence at transcript level"/>
<feature type="initiator methionine" description="Removed" evidence="2">
    <location>
        <position position="1"/>
    </location>
</feature>
<feature type="chain" id="PRO_0000420489" description="Ubiquitin carboxyl-terminal hydrolase 15">
    <location>
        <begin position="2"/>
        <end position="952"/>
    </location>
</feature>
<feature type="domain" description="DUSP" evidence="3">
    <location>
        <begin position="7"/>
        <end position="118"/>
    </location>
</feature>
<feature type="domain" description="USP" evidence="4">
    <location>
        <begin position="260"/>
        <end position="904"/>
    </location>
</feature>
<feature type="region of interest" description="Mediates interaction with SART3" evidence="2">
    <location>
        <begin position="2"/>
        <end position="223"/>
    </location>
</feature>
<feature type="region of interest" description="Disordered" evidence="7">
    <location>
        <begin position="598"/>
        <end position="666"/>
    </location>
</feature>
<feature type="region of interest" description="Disordered" evidence="7">
    <location>
        <begin position="923"/>
        <end position="952"/>
    </location>
</feature>
<feature type="compositionally biased region" description="Acidic residues" evidence="7">
    <location>
        <begin position="627"/>
        <end position="644"/>
    </location>
</feature>
<feature type="compositionally biased region" description="Acidic residues" evidence="7">
    <location>
        <begin position="931"/>
        <end position="945"/>
    </location>
</feature>
<feature type="active site" description="Nucleophile" evidence="5 6">
    <location>
        <position position="269"/>
    </location>
</feature>
<feature type="active site" description="Proton acceptor" evidence="5 6">
    <location>
        <position position="862"/>
    </location>
</feature>
<feature type="modified residue" description="N-acetylalanine" evidence="2">
    <location>
        <position position="2"/>
    </location>
</feature>
<feature type="modified residue" description="Phosphothreonine" evidence="2">
    <location>
        <position position="226"/>
    </location>
</feature>
<feature type="modified residue" description="Phosphothreonine" evidence="1">
    <location>
        <position position="573"/>
    </location>
</feature>
<feature type="modified residue" description="Phosphoserine" evidence="2">
    <location>
        <position position="932"/>
    </location>
</feature>
<feature type="modified residue" description="Phosphoserine" evidence="2">
    <location>
        <position position="936"/>
    </location>
</feature>
<evidence type="ECO:0000250" key="1">
    <source>
        <dbReference type="UniProtKB" id="Q8R5H1"/>
    </source>
</evidence>
<evidence type="ECO:0000250" key="2">
    <source>
        <dbReference type="UniProtKB" id="Q9Y4E8"/>
    </source>
</evidence>
<evidence type="ECO:0000255" key="3">
    <source>
        <dbReference type="PROSITE-ProRule" id="PRU00613"/>
    </source>
</evidence>
<evidence type="ECO:0000255" key="4">
    <source>
        <dbReference type="PROSITE-ProRule" id="PRU01035"/>
    </source>
</evidence>
<evidence type="ECO:0000255" key="5">
    <source>
        <dbReference type="PROSITE-ProRule" id="PRU10092"/>
    </source>
</evidence>
<evidence type="ECO:0000255" key="6">
    <source>
        <dbReference type="PROSITE-ProRule" id="PRU10093"/>
    </source>
</evidence>
<evidence type="ECO:0000256" key="7">
    <source>
        <dbReference type="SAM" id="MobiDB-lite"/>
    </source>
</evidence>
<evidence type="ECO:0000305" key="8"/>
<gene>
    <name type="primary">USP15</name>
</gene>
<dbReference type="EC" id="3.4.19.12" evidence="2"/>
<dbReference type="EMBL" id="DAAA02013374">
    <property type="status" value="NOT_ANNOTATED_CDS"/>
    <property type="molecule type" value="Genomic_DNA"/>
</dbReference>
<dbReference type="EMBL" id="DAAA02013375">
    <property type="status" value="NOT_ANNOTATED_CDS"/>
    <property type="molecule type" value="Genomic_DNA"/>
</dbReference>
<dbReference type="EMBL" id="DAAA02013376">
    <property type="status" value="NOT_ANNOTATED_CDS"/>
    <property type="molecule type" value="Genomic_DNA"/>
</dbReference>
<dbReference type="EMBL" id="DAAA02013377">
    <property type="status" value="NOT_ANNOTATED_CDS"/>
    <property type="molecule type" value="Genomic_DNA"/>
</dbReference>
<dbReference type="EMBL" id="DAAA02013378">
    <property type="status" value="NOT_ANNOTATED_CDS"/>
    <property type="molecule type" value="Genomic_DNA"/>
</dbReference>
<dbReference type="EMBL" id="BC105521">
    <property type="protein sequence ID" value="AAI05522.1"/>
    <property type="molecule type" value="mRNA"/>
</dbReference>
<dbReference type="RefSeq" id="NP_001039895.1">
    <property type="nucleotide sequence ID" value="NM_001046430.2"/>
</dbReference>
<dbReference type="BMRB" id="Q2HJE4"/>
<dbReference type="SMR" id="Q2HJE4"/>
<dbReference type="FunCoup" id="Q2HJE4">
    <property type="interactions" value="2665"/>
</dbReference>
<dbReference type="STRING" id="9913.ENSBTAP00000064906"/>
<dbReference type="MEROPS" id="C19.022"/>
<dbReference type="PaxDb" id="9913-ENSBTAP00000037402"/>
<dbReference type="Ensembl" id="ENSBTAT00000078328.1">
    <property type="protein sequence ID" value="ENSBTAP00000056662.1"/>
    <property type="gene ID" value="ENSBTAG00000010428.7"/>
</dbReference>
<dbReference type="GeneID" id="538284"/>
<dbReference type="KEGG" id="bta:538284"/>
<dbReference type="CTD" id="9958"/>
<dbReference type="VEuPathDB" id="HostDB:ENSBTAG00000010428"/>
<dbReference type="VGNC" id="VGNC:36713">
    <property type="gene designation" value="USP15"/>
</dbReference>
<dbReference type="eggNOG" id="KOG1870">
    <property type="taxonomic scope" value="Eukaryota"/>
</dbReference>
<dbReference type="GeneTree" id="ENSGT00940000154932"/>
<dbReference type="HOGENOM" id="CLU_001060_7_1_1"/>
<dbReference type="InParanoid" id="Q2HJE4"/>
<dbReference type="OrthoDB" id="265776at2759"/>
<dbReference type="TreeFam" id="TF106276"/>
<dbReference type="Reactome" id="R-BTA-5689880">
    <property type="pathway name" value="Ub-specific processing proteases"/>
</dbReference>
<dbReference type="Proteomes" id="UP000009136">
    <property type="component" value="Chromosome 5"/>
</dbReference>
<dbReference type="Bgee" id="ENSBTAG00000010428">
    <property type="expression patterns" value="Expressed in spermatid and 108 other cell types or tissues"/>
</dbReference>
<dbReference type="GO" id="GO:0005737">
    <property type="term" value="C:cytoplasm"/>
    <property type="evidence" value="ECO:0000250"/>
    <property type="project" value="UniProtKB"/>
</dbReference>
<dbReference type="GO" id="GO:0005739">
    <property type="term" value="C:mitochondrion"/>
    <property type="evidence" value="ECO:0007669"/>
    <property type="project" value="UniProtKB-SubCell"/>
</dbReference>
<dbReference type="GO" id="GO:0005634">
    <property type="term" value="C:nucleus"/>
    <property type="evidence" value="ECO:0000250"/>
    <property type="project" value="UniProtKB"/>
</dbReference>
<dbReference type="GO" id="GO:0004843">
    <property type="term" value="F:cysteine-type deubiquitinase activity"/>
    <property type="evidence" value="ECO:0000250"/>
    <property type="project" value="UniProtKB"/>
</dbReference>
<dbReference type="GO" id="GO:0004197">
    <property type="term" value="F:cysteine-type endopeptidase activity"/>
    <property type="evidence" value="ECO:0000250"/>
    <property type="project" value="UniProtKB"/>
</dbReference>
<dbReference type="GO" id="GO:0030509">
    <property type="term" value="P:BMP signaling pathway"/>
    <property type="evidence" value="ECO:0000250"/>
    <property type="project" value="UniProtKB"/>
</dbReference>
<dbReference type="GO" id="GO:0035520">
    <property type="term" value="P:monoubiquitinated protein deubiquitination"/>
    <property type="evidence" value="ECO:0000250"/>
    <property type="project" value="UniProtKB"/>
</dbReference>
<dbReference type="GO" id="GO:1905035">
    <property type="term" value="P:negative regulation of antifungal innate immune response"/>
    <property type="evidence" value="ECO:0000250"/>
    <property type="project" value="UniProtKB"/>
</dbReference>
<dbReference type="GO" id="GO:0030512">
    <property type="term" value="P:negative regulation of transforming growth factor beta receptor signaling pathway"/>
    <property type="evidence" value="ECO:0000250"/>
    <property type="project" value="UniProtKB"/>
</dbReference>
<dbReference type="GO" id="GO:1990167">
    <property type="term" value="P:protein K27-linked deubiquitination"/>
    <property type="evidence" value="ECO:0000250"/>
    <property type="project" value="UniProtKB"/>
</dbReference>
<dbReference type="GO" id="GO:0006508">
    <property type="term" value="P:proteolysis"/>
    <property type="evidence" value="ECO:0007669"/>
    <property type="project" value="UniProtKB-KW"/>
</dbReference>
<dbReference type="GO" id="GO:0140673">
    <property type="term" value="P:transcription elongation-coupled chromatin remodeling"/>
    <property type="evidence" value="ECO:0000250"/>
    <property type="project" value="UniProtKB"/>
</dbReference>
<dbReference type="CDD" id="cd02674">
    <property type="entry name" value="Peptidase_C19R"/>
    <property type="match status" value="1"/>
</dbReference>
<dbReference type="FunFam" id="3.30.2230.10:FF:000003">
    <property type="entry name" value="ubiquitin carboxyl-terminal hydrolase 15 isoform X1"/>
    <property type="match status" value="1"/>
</dbReference>
<dbReference type="FunFam" id="3.90.70.10:FF:000013">
    <property type="entry name" value="ubiquitin carboxyl-terminal hydrolase 15 isoform X1"/>
    <property type="match status" value="1"/>
</dbReference>
<dbReference type="FunFam" id="3.90.70.10:FF:000034">
    <property type="entry name" value="ubiquitin carboxyl-terminal hydrolase 15 isoform X1"/>
    <property type="match status" value="1"/>
</dbReference>
<dbReference type="FunFam" id="3.10.20.90:FF:000020">
    <property type="entry name" value="ubiquitin carboxyl-terminal hydrolase 15 isoform X2"/>
    <property type="match status" value="1"/>
</dbReference>
<dbReference type="Gene3D" id="3.90.70.10">
    <property type="entry name" value="Cysteine proteinases"/>
    <property type="match status" value="2"/>
</dbReference>
<dbReference type="Gene3D" id="3.30.2230.10">
    <property type="entry name" value="DUSP-like"/>
    <property type="match status" value="1"/>
</dbReference>
<dbReference type="Gene3D" id="3.10.20.90">
    <property type="entry name" value="Phosphatidylinositol 3-kinase Catalytic Subunit, Chain A, domain 1"/>
    <property type="match status" value="1"/>
</dbReference>
<dbReference type="InterPro" id="IPR035927">
    <property type="entry name" value="DUSP-like_sf"/>
</dbReference>
<dbReference type="InterPro" id="IPR038765">
    <property type="entry name" value="Papain-like_cys_pep_sf"/>
</dbReference>
<dbReference type="InterPro" id="IPR006615">
    <property type="entry name" value="Pept_C19_DUSP"/>
</dbReference>
<dbReference type="InterPro" id="IPR001394">
    <property type="entry name" value="Peptidase_C19_UCH"/>
</dbReference>
<dbReference type="InterPro" id="IPR013792">
    <property type="entry name" value="RNA3'P_cycl/enolpyr_Trfase_a/b"/>
</dbReference>
<dbReference type="InterPro" id="IPR050185">
    <property type="entry name" value="Ub_carboxyl-term_hydrolase"/>
</dbReference>
<dbReference type="InterPro" id="IPR028135">
    <property type="entry name" value="Ub_USP-typ"/>
</dbReference>
<dbReference type="InterPro" id="IPR029071">
    <property type="entry name" value="Ubiquitin-like_domsf"/>
</dbReference>
<dbReference type="InterPro" id="IPR029346">
    <property type="entry name" value="USP_C"/>
</dbReference>
<dbReference type="InterPro" id="IPR018200">
    <property type="entry name" value="USP_CS"/>
</dbReference>
<dbReference type="InterPro" id="IPR028889">
    <property type="entry name" value="USP_dom"/>
</dbReference>
<dbReference type="PANTHER" id="PTHR21646">
    <property type="entry name" value="UBIQUITIN CARBOXYL-TERMINAL HYDROLASE"/>
    <property type="match status" value="1"/>
</dbReference>
<dbReference type="PANTHER" id="PTHR21646:SF28">
    <property type="entry name" value="UBIQUITIN CARBOXYL-TERMINAL HYDROLASE 15"/>
    <property type="match status" value="1"/>
</dbReference>
<dbReference type="Pfam" id="PF06337">
    <property type="entry name" value="DUSP"/>
    <property type="match status" value="1"/>
</dbReference>
<dbReference type="Pfam" id="PF14836">
    <property type="entry name" value="Ubiquitin_3"/>
    <property type="match status" value="1"/>
</dbReference>
<dbReference type="Pfam" id="PF00443">
    <property type="entry name" value="UCH"/>
    <property type="match status" value="1"/>
</dbReference>
<dbReference type="Pfam" id="PF14533">
    <property type="entry name" value="USP7_C2"/>
    <property type="match status" value="1"/>
</dbReference>
<dbReference type="SMART" id="SM00695">
    <property type="entry name" value="DUSP"/>
    <property type="match status" value="1"/>
</dbReference>
<dbReference type="SUPFAM" id="SSF54001">
    <property type="entry name" value="Cysteine proteinases"/>
    <property type="match status" value="1"/>
</dbReference>
<dbReference type="SUPFAM" id="SSF143791">
    <property type="entry name" value="DUSP-like"/>
    <property type="match status" value="1"/>
</dbReference>
<dbReference type="SUPFAM" id="SSF55205">
    <property type="entry name" value="EPT/RTPC-like"/>
    <property type="match status" value="1"/>
</dbReference>
<dbReference type="SUPFAM" id="SSF54236">
    <property type="entry name" value="Ubiquitin-like"/>
    <property type="match status" value="1"/>
</dbReference>
<dbReference type="PROSITE" id="PS51283">
    <property type="entry name" value="DUSP"/>
    <property type="match status" value="1"/>
</dbReference>
<dbReference type="PROSITE" id="PS00972">
    <property type="entry name" value="USP_1"/>
    <property type="match status" value="1"/>
</dbReference>
<dbReference type="PROSITE" id="PS00973">
    <property type="entry name" value="USP_2"/>
    <property type="match status" value="1"/>
</dbReference>
<dbReference type="PROSITE" id="PS50235">
    <property type="entry name" value="USP_3"/>
    <property type="match status" value="1"/>
</dbReference>
<protein>
    <recommendedName>
        <fullName>Ubiquitin carboxyl-terminal hydrolase 15</fullName>
        <ecNumber evidence="2">3.4.19.12</ecNumber>
    </recommendedName>
    <alternativeName>
        <fullName>Deubiquitinating enzyme 15</fullName>
    </alternativeName>
    <alternativeName>
        <fullName>Ubiquitin thioesterase 15</fullName>
    </alternativeName>
    <alternativeName>
        <fullName>Ubiquitin-specific-processing protease 15</fullName>
    </alternativeName>
</protein>
<name>UBP15_BOVIN</name>
<comment type="function">
    <text evidence="2">Hydrolase that removes conjugated ubiquitin from target proteins and regulates various pathways such as the TGF-beta receptor signaling, NF-kappa-B and RNF41/NRDP1-PRKN pathways. Acts as a key regulator of TGF-beta receptor signaling pathway, but the precise mechanism is still unclear: according to a report, acts by promoting deubiquitination of monoubiquitinated R-SMADs (SMAD1, SMAD2 and/or SMAD3), thereby alleviating inhibition of R-SMADs and promoting activation of TGF-beta target genes. According to another reports, regulates the TGF-beta receptor signaling pathway by mediating deubiquitination and stabilization of TGFBR1, leading to an enhanced TGF-beta signal. Able to mediate deubiquitination of monoubiquitinated substrates, 'Lys-27'-, 'Lys-48'- and 'Lys-63'-linked polyubiquitin chains. May also regulate gene expression and/or DNA repair through the deubiquitination of histone H2B. Acts as an inhibitor of mitophagy by counteracting the action of parkin (PRKN): hydrolyzes cleavage of 'Lys-48'- and 'Lys-63'-linked polyubiquitin chains attached by parkin on target proteins such as MFN2, thereby reducing parkin's ability to drive mitophagy. Acts as an associated component of COP9 signalosome complex (CSN) and regulates different pathways via this association: regulates NF-kappa-B by mediating deubiquitination of NFKBIA and deubiquitinates substrates bound to VCP. Involved in endosome organization by mediating deubiquitination of SQSTM1: ubiquitinated SQSTM1 forms a molecular bridge that restrains cognate vesicles in the perinuclear region and its deubiquitination releases target vesicles for fast transport into the cell periphery. Acts as a negative regulator of antifungal immunity by mediating 'Lys-27'-linked deubiquitination of CARD9, thereby inactivating CARD9.</text>
</comment>
<comment type="catalytic activity">
    <reaction evidence="2">
        <text>Thiol-dependent hydrolysis of ester, thioester, amide, peptide and isopeptide bonds formed by the C-terminal Gly of ubiquitin (a 76-residue protein attached to proteins as an intracellular targeting signal).</text>
        <dbReference type="EC" id="3.4.19.12"/>
    </reaction>
</comment>
<comment type="subunit">
    <text evidence="2">A homodimer structure has been reported; however it is unclear whether the protein form a homodimer in vivo. Identified in a complex with the COP9 signalosome complex (CSN). Interacts with SMAD1, SMAD2 and SMAD3; the interaction is direct. Forms a complex with SMURF2 and SMAD7. Interacts with TGFBR1. Interacts with SART3; the interaction is direct. May interact with RNF20 and RNF40. May interact with PRKN. Interacts with INCA1.</text>
</comment>
<comment type="subcellular location">
    <subcellularLocation>
        <location evidence="2">Cytoplasm</location>
    </subcellularLocation>
    <subcellularLocation>
        <location evidence="2">Nucleus</location>
    </subcellularLocation>
    <subcellularLocation>
        <location evidence="2">Mitochondrion</location>
    </subcellularLocation>
</comment>
<comment type="PTM">
    <text evidence="2">Phosphorylated. Phosphorylation protects against ubiquitination and subsequent degradation by the proteasome.</text>
</comment>
<comment type="PTM">
    <text evidence="2">Ubiquitinated, leading to degradation by the proteasome.</text>
</comment>
<comment type="similarity">
    <text evidence="8">Belongs to the peptidase C19 family.</text>
</comment>
<organism>
    <name type="scientific">Bos taurus</name>
    <name type="common">Bovine</name>
    <dbReference type="NCBI Taxonomy" id="9913"/>
    <lineage>
        <taxon>Eukaryota</taxon>
        <taxon>Metazoa</taxon>
        <taxon>Chordata</taxon>
        <taxon>Craniata</taxon>
        <taxon>Vertebrata</taxon>
        <taxon>Euteleostomi</taxon>
        <taxon>Mammalia</taxon>
        <taxon>Eutheria</taxon>
        <taxon>Laurasiatheria</taxon>
        <taxon>Artiodactyla</taxon>
        <taxon>Ruminantia</taxon>
        <taxon>Pecora</taxon>
        <taxon>Bovidae</taxon>
        <taxon>Bovinae</taxon>
        <taxon>Bos</taxon>
    </lineage>
</organism>
<keyword id="KW-0007">Acetylation</keyword>
<keyword id="KW-0963">Cytoplasm</keyword>
<keyword id="KW-0378">Hydrolase</keyword>
<keyword id="KW-0496">Mitochondrion</keyword>
<keyword id="KW-0539">Nucleus</keyword>
<keyword id="KW-0597">Phosphoprotein</keyword>
<keyword id="KW-0645">Protease</keyword>
<keyword id="KW-1185">Reference proteome</keyword>
<keyword id="KW-0788">Thiol protease</keyword>
<keyword id="KW-0832">Ubl conjugation</keyword>
<keyword id="KW-0833">Ubl conjugation pathway</keyword>
<reference key="1">
    <citation type="journal article" date="2009" name="Genome Biol.">
        <title>A whole-genome assembly of the domestic cow, Bos taurus.</title>
        <authorList>
            <person name="Zimin A.V."/>
            <person name="Delcher A.L."/>
            <person name="Florea L."/>
            <person name="Kelley D.R."/>
            <person name="Schatz M.C."/>
            <person name="Puiu D."/>
            <person name="Hanrahan F."/>
            <person name="Pertea G."/>
            <person name="Van Tassell C.P."/>
            <person name="Sonstegard T.S."/>
            <person name="Marcais G."/>
            <person name="Roberts M."/>
            <person name="Subramanian P."/>
            <person name="Yorke J.A."/>
            <person name="Salzberg S.L."/>
        </authorList>
    </citation>
    <scope>NUCLEOTIDE SEQUENCE [LARGE SCALE GENOMIC DNA]</scope>
    <source>
        <strain>Hereford</strain>
    </source>
</reference>
<reference key="2">
    <citation type="submission" date="2005-09" db="EMBL/GenBank/DDBJ databases">
        <authorList>
            <consortium name="NIH - Mammalian Gene Collection (MGC) project"/>
        </authorList>
    </citation>
    <scope>NUCLEOTIDE SEQUENCE [LARGE SCALE MRNA]</scope>
    <source>
        <strain>Hereford</strain>
        <tissue>Uterus</tissue>
    </source>
</reference>
<sequence>MAEGGAADLDIQRSDIATLLKTSLRKGDTWYLVDSRWFKQWKKYVGFDSWDKYQMGDQNVYPGPIDNSGLLRDGDAQSLKEHLIDELDYILLPTEGWNKLVSWYTLMEGQEPIARKVVEQGMFVKHCKVEVYLTELKLCENGNMNNVVTRRFSKADTIDTIEKEIRKIFNIPDEKETRLWNKYMSNTFEPLNKPDSTIQDAGLYQGQVLVIEQKNEDGTWPRGPSTPNVKNSNYCLPSYTAYKNYDYSEPGRNNEQPGLCGLSNLGNTCFMNSAFQCLSNTPPLTEYFLNDKYQEELNFDNPLGMRGEIAKSYAELIKQMWSGKYSYVTPRAFKTQVGRFAPQFSGYQQQDCQELLAFLLDGLHEDLNRIRKKPYIQLKDADGRPDKVVAEEAWENHLKRNDSIIVDIFHGLFKSTLVCPECAKISVTFDPFCYLTLPLPMKKERTLEVYLVRMDPLTKPMQYKVVVPKIGNILDLCTALSLLSGVPADKMIVTDIYNHRFHRIFAMDENLSSIMERDDIYVFEININRTEDTEHVIIPVCLREKFRHSSYTHHTGSSLFGQPFLMAVPRNNTEDKLYNLLLVRMCRYVKISTDTEDTEGSLHCCKDQNINGNGPNGIHEEGSPSEMETDEPDDESSQDQELPSENENSQSEDSVGGDNDSENGLCTEETCRGQLTGHKKRLFTFQFNNLGNTDINYIKDDTRHIRFDDRQLRLDERSFLALDWDPDLKKRYFDENAAEDFEKHESVEYKPPKKPFVKLKDCIELFTTKEKLGAEDPWYCPNCKEHQQATKKLDLWSLPPVLVVHLKRFSYSRYMRDKLDTLVDFPINDLDMSEFLINPNAGPCRYNLIAVSNHYGGMGGGHYTAFAKNKDDGKWYYFDDSSVSTASEDQIVSKAAYVLFYQRQDTFSGTGFFPLDRETKGASAATGIPLESDEDSNDNDNDIENENCMHTN</sequence>
<accession>Q2HJE4</accession>